<keyword id="KW-0131">Cell cycle</keyword>
<keyword id="KW-0132">Cell division</keyword>
<keyword id="KW-0997">Cell inner membrane</keyword>
<keyword id="KW-1003">Cell membrane</keyword>
<keyword id="KW-0472">Membrane</keyword>
<keyword id="KW-1185">Reference proteome</keyword>
<keyword id="KW-0812">Transmembrane</keyword>
<keyword id="KW-1133">Transmembrane helix</keyword>
<sequence length="244" mass="26954">MSDMAMIRIGILIAGLLLVAAIFLFGRPKKSPQGRRVDKDDTQPRERREPVISSGVDADGMPFERSDTGAEQSELELDDQDGAGGNDVGKRPNQDFDKIVSLFVAAKAGQVLRGEDVVVAAEKTGLVFGHMNVFHRLVEGHPERGPIFSMASILKPGSFDMANIREMQTPAIAFFLTLPAPMTALDAWEKMLPTVQRMAELLDGVVLDDSRNALGRQRVAHIRDELRAYDRQHQAPPLTKSPRW</sequence>
<protein>
    <recommendedName>
        <fullName evidence="1">Cell division protein ZipA</fullName>
    </recommendedName>
</protein>
<reference key="1">
    <citation type="journal article" date="2002" name="Nature">
        <title>Comparison of the genomes of two Xanthomonas pathogens with differing host specificities.</title>
        <authorList>
            <person name="da Silva A.C.R."/>
            <person name="Ferro J.A."/>
            <person name="Reinach F.C."/>
            <person name="Farah C.S."/>
            <person name="Furlan L.R."/>
            <person name="Quaggio R.B."/>
            <person name="Monteiro-Vitorello C.B."/>
            <person name="Van Sluys M.A."/>
            <person name="Almeida N.F. Jr."/>
            <person name="Alves L.M.C."/>
            <person name="do Amaral A.M."/>
            <person name="Bertolini M.C."/>
            <person name="Camargo L.E.A."/>
            <person name="Camarotte G."/>
            <person name="Cannavan F."/>
            <person name="Cardozo J."/>
            <person name="Chambergo F."/>
            <person name="Ciapina L.P."/>
            <person name="Cicarelli R.M.B."/>
            <person name="Coutinho L.L."/>
            <person name="Cursino-Santos J.R."/>
            <person name="El-Dorry H."/>
            <person name="Faria J.B."/>
            <person name="Ferreira A.J.S."/>
            <person name="Ferreira R.C.C."/>
            <person name="Ferro M.I.T."/>
            <person name="Formighieri E.F."/>
            <person name="Franco M.C."/>
            <person name="Greggio C.C."/>
            <person name="Gruber A."/>
            <person name="Katsuyama A.M."/>
            <person name="Kishi L.T."/>
            <person name="Leite R.P."/>
            <person name="Lemos E.G.M."/>
            <person name="Lemos M.V.F."/>
            <person name="Locali E.C."/>
            <person name="Machado M.A."/>
            <person name="Madeira A.M.B.N."/>
            <person name="Martinez-Rossi N.M."/>
            <person name="Martins E.C."/>
            <person name="Meidanis J."/>
            <person name="Menck C.F.M."/>
            <person name="Miyaki C.Y."/>
            <person name="Moon D.H."/>
            <person name="Moreira L.M."/>
            <person name="Novo M.T.M."/>
            <person name="Okura V.K."/>
            <person name="Oliveira M.C."/>
            <person name="Oliveira V.R."/>
            <person name="Pereira H.A."/>
            <person name="Rossi A."/>
            <person name="Sena J.A.D."/>
            <person name="Silva C."/>
            <person name="de Souza R.F."/>
            <person name="Spinola L.A.F."/>
            <person name="Takita M.A."/>
            <person name="Tamura R.E."/>
            <person name="Teixeira E.C."/>
            <person name="Tezza R.I.D."/>
            <person name="Trindade dos Santos M."/>
            <person name="Truffi D."/>
            <person name="Tsai S.M."/>
            <person name="White F.F."/>
            <person name="Setubal J.C."/>
            <person name="Kitajima J.P."/>
        </authorList>
    </citation>
    <scope>NUCLEOTIDE SEQUENCE [LARGE SCALE GENOMIC DNA]</scope>
    <source>
        <strain>ATCC 33913 / DSM 3586 / NCPPB 528 / LMG 568 / P 25</strain>
    </source>
</reference>
<accession>Q8PAB7</accession>
<proteinExistence type="inferred from homology"/>
<evidence type="ECO:0000255" key="1">
    <source>
        <dbReference type="HAMAP-Rule" id="MF_00509"/>
    </source>
</evidence>
<evidence type="ECO:0000256" key="2">
    <source>
        <dbReference type="SAM" id="MobiDB-lite"/>
    </source>
</evidence>
<dbReference type="EMBL" id="AE008922">
    <property type="protein sequence ID" value="AAM40863.1"/>
    <property type="molecule type" value="Genomic_DNA"/>
</dbReference>
<dbReference type="RefSeq" id="NP_636939.1">
    <property type="nucleotide sequence ID" value="NC_003902.1"/>
</dbReference>
<dbReference type="RefSeq" id="WP_011036750.1">
    <property type="nucleotide sequence ID" value="NC_003902.1"/>
</dbReference>
<dbReference type="SMR" id="Q8PAB7"/>
<dbReference type="STRING" id="190485.XCC1568"/>
<dbReference type="EnsemblBacteria" id="AAM40863">
    <property type="protein sequence ID" value="AAM40863"/>
    <property type="gene ID" value="XCC1568"/>
</dbReference>
<dbReference type="GeneID" id="58013840"/>
<dbReference type="KEGG" id="xcc:XCC1568"/>
<dbReference type="PATRIC" id="fig|190485.4.peg.1681"/>
<dbReference type="eggNOG" id="COG3115">
    <property type="taxonomic scope" value="Bacteria"/>
</dbReference>
<dbReference type="HOGENOM" id="CLU_030174_2_1_6"/>
<dbReference type="OrthoDB" id="7054914at2"/>
<dbReference type="Proteomes" id="UP000001010">
    <property type="component" value="Chromosome"/>
</dbReference>
<dbReference type="GO" id="GO:0032153">
    <property type="term" value="C:cell division site"/>
    <property type="evidence" value="ECO:0000318"/>
    <property type="project" value="GO_Central"/>
</dbReference>
<dbReference type="GO" id="GO:0005886">
    <property type="term" value="C:plasma membrane"/>
    <property type="evidence" value="ECO:0000318"/>
    <property type="project" value="GO_Central"/>
</dbReference>
<dbReference type="GO" id="GO:0000917">
    <property type="term" value="P:division septum assembly"/>
    <property type="evidence" value="ECO:0000318"/>
    <property type="project" value="GO_Central"/>
</dbReference>
<dbReference type="GO" id="GO:0043093">
    <property type="term" value="P:FtsZ-dependent cytokinesis"/>
    <property type="evidence" value="ECO:0007669"/>
    <property type="project" value="UniProtKB-UniRule"/>
</dbReference>
<dbReference type="FunFam" id="3.30.1400.10:FF:000003">
    <property type="entry name" value="Cell division protein ZipA"/>
    <property type="match status" value="1"/>
</dbReference>
<dbReference type="Gene3D" id="3.30.1400.10">
    <property type="entry name" value="ZipA, C-terminal FtsZ-binding domain"/>
    <property type="match status" value="1"/>
</dbReference>
<dbReference type="HAMAP" id="MF_00509">
    <property type="entry name" value="ZipA"/>
    <property type="match status" value="1"/>
</dbReference>
<dbReference type="InterPro" id="IPR011919">
    <property type="entry name" value="Cell_div_ZipA"/>
</dbReference>
<dbReference type="InterPro" id="IPR007449">
    <property type="entry name" value="ZipA_FtsZ-bd_C"/>
</dbReference>
<dbReference type="InterPro" id="IPR036765">
    <property type="entry name" value="ZipA_FtsZ-bd_C_sf"/>
</dbReference>
<dbReference type="NCBIfam" id="TIGR02205">
    <property type="entry name" value="septum_zipA"/>
    <property type="match status" value="1"/>
</dbReference>
<dbReference type="PANTHER" id="PTHR38685">
    <property type="entry name" value="CELL DIVISION PROTEIN ZIPA"/>
    <property type="match status" value="1"/>
</dbReference>
<dbReference type="PANTHER" id="PTHR38685:SF1">
    <property type="entry name" value="CELL DIVISION PROTEIN ZIPA"/>
    <property type="match status" value="1"/>
</dbReference>
<dbReference type="Pfam" id="PF04354">
    <property type="entry name" value="ZipA_C"/>
    <property type="match status" value="1"/>
</dbReference>
<dbReference type="SMART" id="SM00771">
    <property type="entry name" value="ZipA_C"/>
    <property type="match status" value="1"/>
</dbReference>
<dbReference type="SUPFAM" id="SSF64383">
    <property type="entry name" value="Cell-division protein ZipA, C-terminal domain"/>
    <property type="match status" value="1"/>
</dbReference>
<name>ZIPA_XANCP</name>
<comment type="function">
    <text evidence="1">Essential cell division protein that stabilizes the FtsZ protofilaments by cross-linking them and that serves as a cytoplasmic membrane anchor for the Z ring. Also required for the recruitment to the septal ring of downstream cell division proteins.</text>
</comment>
<comment type="subunit">
    <text evidence="1">Interacts with FtsZ via their C-terminal domains.</text>
</comment>
<comment type="subcellular location">
    <subcellularLocation>
        <location evidence="1">Cell inner membrane</location>
        <topology evidence="1">Single-pass type I membrane protein</topology>
    </subcellularLocation>
    <text evidence="1">Localizes to the Z ring in an FtsZ-dependent manner.</text>
</comment>
<comment type="similarity">
    <text evidence="1">Belongs to the ZipA family.</text>
</comment>
<gene>
    <name evidence="1" type="primary">zipA</name>
    <name type="ordered locus">XCC1568</name>
</gene>
<feature type="chain" id="PRO_0000214543" description="Cell division protein ZipA">
    <location>
        <begin position="1"/>
        <end position="244"/>
    </location>
</feature>
<feature type="topological domain" description="Periplasmic" evidence="1">
    <location>
        <begin position="1"/>
        <end position="4"/>
    </location>
</feature>
<feature type="transmembrane region" description="Helical" evidence="1">
    <location>
        <begin position="5"/>
        <end position="25"/>
    </location>
</feature>
<feature type="topological domain" description="Cytoplasmic" evidence="1">
    <location>
        <begin position="26"/>
        <end position="244"/>
    </location>
</feature>
<feature type="region of interest" description="Disordered" evidence="2">
    <location>
        <begin position="30"/>
        <end position="91"/>
    </location>
</feature>
<feature type="compositionally biased region" description="Basic and acidic residues" evidence="2">
    <location>
        <begin position="35"/>
        <end position="50"/>
    </location>
</feature>
<organism>
    <name type="scientific">Xanthomonas campestris pv. campestris (strain ATCC 33913 / DSM 3586 / NCPPB 528 / LMG 568 / P 25)</name>
    <dbReference type="NCBI Taxonomy" id="190485"/>
    <lineage>
        <taxon>Bacteria</taxon>
        <taxon>Pseudomonadati</taxon>
        <taxon>Pseudomonadota</taxon>
        <taxon>Gammaproteobacteria</taxon>
        <taxon>Lysobacterales</taxon>
        <taxon>Lysobacteraceae</taxon>
        <taxon>Xanthomonas</taxon>
    </lineage>
</organism>